<evidence type="ECO:0000255" key="1">
    <source>
        <dbReference type="HAMAP-Rule" id="MF_02012"/>
    </source>
</evidence>
<dbReference type="EMBL" id="CU928163">
    <property type="protein sequence ID" value="CAR14415.1"/>
    <property type="molecule type" value="Genomic_DNA"/>
</dbReference>
<dbReference type="RefSeq" id="WP_001276008.1">
    <property type="nucleotide sequence ID" value="NC_011751.1"/>
</dbReference>
<dbReference type="RefSeq" id="YP_002413934.1">
    <property type="nucleotide sequence ID" value="NC_011751.1"/>
</dbReference>
<dbReference type="SMR" id="B7N7F3"/>
<dbReference type="STRING" id="585056.ECUMN_3252"/>
<dbReference type="GeneID" id="93779091"/>
<dbReference type="KEGG" id="eum:ECUMN_3252"/>
<dbReference type="PATRIC" id="fig|585056.7.peg.3429"/>
<dbReference type="HOGENOM" id="CLU_116623_3_0_6"/>
<dbReference type="Proteomes" id="UP000007097">
    <property type="component" value="Chromosome"/>
</dbReference>
<dbReference type="GO" id="GO:0032153">
    <property type="term" value="C:cell division site"/>
    <property type="evidence" value="ECO:0007669"/>
    <property type="project" value="TreeGrafter"/>
</dbReference>
<dbReference type="GO" id="GO:0030428">
    <property type="term" value="C:cell septum"/>
    <property type="evidence" value="ECO:0007669"/>
    <property type="project" value="TreeGrafter"/>
</dbReference>
<dbReference type="GO" id="GO:0005829">
    <property type="term" value="C:cytosol"/>
    <property type="evidence" value="ECO:0007669"/>
    <property type="project" value="TreeGrafter"/>
</dbReference>
<dbReference type="GO" id="GO:0005886">
    <property type="term" value="C:plasma membrane"/>
    <property type="evidence" value="ECO:0007669"/>
    <property type="project" value="UniProtKB-UniRule"/>
</dbReference>
<dbReference type="GO" id="GO:0000917">
    <property type="term" value="P:division septum assembly"/>
    <property type="evidence" value="ECO:0007669"/>
    <property type="project" value="UniProtKB-KW"/>
</dbReference>
<dbReference type="GO" id="GO:0043093">
    <property type="term" value="P:FtsZ-dependent cytokinesis"/>
    <property type="evidence" value="ECO:0007669"/>
    <property type="project" value="TreeGrafter"/>
</dbReference>
<dbReference type="GO" id="GO:0000921">
    <property type="term" value="P:septin ring assembly"/>
    <property type="evidence" value="ECO:0007669"/>
    <property type="project" value="TreeGrafter"/>
</dbReference>
<dbReference type="FunFam" id="1.20.5.50:FF:000001">
    <property type="entry name" value="Cell division protein ZapA"/>
    <property type="match status" value="1"/>
</dbReference>
<dbReference type="FunFam" id="3.30.160.880:FF:000001">
    <property type="entry name" value="Cell division protein ZapA"/>
    <property type="match status" value="1"/>
</dbReference>
<dbReference type="Gene3D" id="1.20.5.50">
    <property type="match status" value="1"/>
</dbReference>
<dbReference type="Gene3D" id="3.30.160.880">
    <property type="entry name" value="Cell division protein ZapA protomer, N-terminal domain"/>
    <property type="match status" value="1"/>
</dbReference>
<dbReference type="HAMAP" id="MF_02012">
    <property type="entry name" value="ZapA_type1"/>
    <property type="match status" value="1"/>
</dbReference>
<dbReference type="InterPro" id="IPR007838">
    <property type="entry name" value="Cell_div_ZapA-like"/>
</dbReference>
<dbReference type="InterPro" id="IPR036192">
    <property type="entry name" value="Cell_div_ZapA-like_sf"/>
</dbReference>
<dbReference type="InterPro" id="IPR023771">
    <property type="entry name" value="Cell_div_ZapA_eubact"/>
</dbReference>
<dbReference type="InterPro" id="IPR042233">
    <property type="entry name" value="Cell_div_ZapA_N"/>
</dbReference>
<dbReference type="NCBIfam" id="NF008209">
    <property type="entry name" value="PRK10972.1"/>
    <property type="match status" value="1"/>
</dbReference>
<dbReference type="PANTHER" id="PTHR34981">
    <property type="entry name" value="CELL DIVISION PROTEIN ZAPA"/>
    <property type="match status" value="1"/>
</dbReference>
<dbReference type="PANTHER" id="PTHR34981:SF1">
    <property type="entry name" value="CELL DIVISION PROTEIN ZAPA"/>
    <property type="match status" value="1"/>
</dbReference>
<dbReference type="Pfam" id="PF05164">
    <property type="entry name" value="ZapA"/>
    <property type="match status" value="1"/>
</dbReference>
<dbReference type="SUPFAM" id="SSF102829">
    <property type="entry name" value="Cell division protein ZapA-like"/>
    <property type="match status" value="1"/>
</dbReference>
<comment type="function">
    <text evidence="1">Activator of cell division through the inhibition of FtsZ GTPase activity, therefore promoting FtsZ assembly into bundles of protofilaments necessary for the formation of the division Z ring. It is recruited early at mid-cell but it is not essential for cell division.</text>
</comment>
<comment type="subunit">
    <text evidence="1">Homodimer. Interacts with FtsZ.</text>
</comment>
<comment type="subcellular location">
    <subcellularLocation>
        <location evidence="1">Cytoplasm</location>
    </subcellularLocation>
    <text evidence="1">Localizes at mid-cell.</text>
</comment>
<comment type="similarity">
    <text evidence="1">Belongs to the ZapA family. Type 1 subfamily.</text>
</comment>
<organism>
    <name type="scientific">Escherichia coli O17:K52:H18 (strain UMN026 / ExPEC)</name>
    <dbReference type="NCBI Taxonomy" id="585056"/>
    <lineage>
        <taxon>Bacteria</taxon>
        <taxon>Pseudomonadati</taxon>
        <taxon>Pseudomonadota</taxon>
        <taxon>Gammaproteobacteria</taxon>
        <taxon>Enterobacterales</taxon>
        <taxon>Enterobacteriaceae</taxon>
        <taxon>Escherichia</taxon>
    </lineage>
</organism>
<accession>B7N7F3</accession>
<keyword id="KW-0131">Cell cycle</keyword>
<keyword id="KW-0132">Cell division</keyword>
<keyword id="KW-0175">Coiled coil</keyword>
<keyword id="KW-0963">Cytoplasm</keyword>
<keyword id="KW-0717">Septation</keyword>
<gene>
    <name evidence="1" type="primary">zapA</name>
    <name type="ordered locus">ECUMN_3252</name>
</gene>
<reference key="1">
    <citation type="journal article" date="2009" name="PLoS Genet.">
        <title>Organised genome dynamics in the Escherichia coli species results in highly diverse adaptive paths.</title>
        <authorList>
            <person name="Touchon M."/>
            <person name="Hoede C."/>
            <person name="Tenaillon O."/>
            <person name="Barbe V."/>
            <person name="Baeriswyl S."/>
            <person name="Bidet P."/>
            <person name="Bingen E."/>
            <person name="Bonacorsi S."/>
            <person name="Bouchier C."/>
            <person name="Bouvet O."/>
            <person name="Calteau A."/>
            <person name="Chiapello H."/>
            <person name="Clermont O."/>
            <person name="Cruveiller S."/>
            <person name="Danchin A."/>
            <person name="Diard M."/>
            <person name="Dossat C."/>
            <person name="Karoui M.E."/>
            <person name="Frapy E."/>
            <person name="Garry L."/>
            <person name="Ghigo J.M."/>
            <person name="Gilles A.M."/>
            <person name="Johnson J."/>
            <person name="Le Bouguenec C."/>
            <person name="Lescat M."/>
            <person name="Mangenot S."/>
            <person name="Martinez-Jehanne V."/>
            <person name="Matic I."/>
            <person name="Nassif X."/>
            <person name="Oztas S."/>
            <person name="Petit M.A."/>
            <person name="Pichon C."/>
            <person name="Rouy Z."/>
            <person name="Ruf C.S."/>
            <person name="Schneider D."/>
            <person name="Tourret J."/>
            <person name="Vacherie B."/>
            <person name="Vallenet D."/>
            <person name="Medigue C."/>
            <person name="Rocha E.P.C."/>
            <person name="Denamur E."/>
        </authorList>
    </citation>
    <scope>NUCLEOTIDE SEQUENCE [LARGE SCALE GENOMIC DNA]</scope>
    <source>
        <strain>UMN026 / ExPEC</strain>
    </source>
</reference>
<protein>
    <recommendedName>
        <fullName evidence="1">Cell division protein ZapA</fullName>
    </recommendedName>
    <alternativeName>
        <fullName evidence="1">Z ring-associated protein ZapA</fullName>
    </alternativeName>
</protein>
<proteinExistence type="inferred from homology"/>
<feature type="chain" id="PRO_1000189513" description="Cell division protein ZapA">
    <location>
        <begin position="1"/>
        <end position="109"/>
    </location>
</feature>
<feature type="coiled-coil region" evidence="1">
    <location>
        <begin position="21"/>
        <end position="99"/>
    </location>
</feature>
<sequence>MSAQPVDIQIFGRSLRVNCPPDQRDALNQAADDLNQRLQDLKERTRVTNTEQLVFIAALNISYELAQEKAKTRDYAASMEQRIRMLQQTIEQALLEQGRITEKTNQNFE</sequence>
<name>ZAPA_ECOLU</name>